<feature type="chain" id="PRO_0000395616" description="Potassium voltage-gated channel subfamily A member 2">
    <location>
        <begin position="1"/>
        <end position="494"/>
    </location>
</feature>
<feature type="topological domain" description="Cytoplasmic" evidence="2">
    <location>
        <begin position="1"/>
        <end position="159"/>
    </location>
</feature>
<feature type="transmembrane region" description="Helical; Name=Segment S1" evidence="2">
    <location>
        <begin position="160"/>
        <end position="181"/>
    </location>
</feature>
<feature type="topological domain" description="Extracellular" evidence="2">
    <location>
        <begin position="182"/>
        <end position="216"/>
    </location>
</feature>
<feature type="transmembrane region" description="Helical; Name=Segment S2" evidence="2">
    <location>
        <begin position="217"/>
        <end position="238"/>
    </location>
</feature>
<feature type="topological domain" description="Cytoplasmic" evidence="2">
    <location>
        <begin position="239"/>
        <end position="249"/>
    </location>
</feature>
<feature type="transmembrane region" description="Helical; Name=Segment S3" evidence="2">
    <location>
        <begin position="250"/>
        <end position="270"/>
    </location>
</feature>
<feature type="topological domain" description="Extracellular" evidence="2">
    <location>
        <begin position="271"/>
        <end position="284"/>
    </location>
</feature>
<feature type="transmembrane region" description="Helical; Voltage-sensor; Name=Segment S4" evidence="2">
    <location>
        <begin position="285"/>
        <end position="305"/>
    </location>
</feature>
<feature type="topological domain" description="Cytoplasmic" evidence="2">
    <location>
        <begin position="306"/>
        <end position="320"/>
    </location>
</feature>
<feature type="transmembrane region" description="Helical; Name=Segment S5" evidence="2">
    <location>
        <begin position="321"/>
        <end position="342"/>
    </location>
</feature>
<feature type="topological domain" description="Extracellular" evidence="2">
    <location>
        <begin position="343"/>
        <end position="356"/>
    </location>
</feature>
<feature type="intramembrane region" description="Helical; Name=Pore helix" evidence="2">
    <location>
        <begin position="357"/>
        <end position="368"/>
    </location>
</feature>
<feature type="intramembrane region" evidence="2">
    <location>
        <begin position="369"/>
        <end position="376"/>
    </location>
</feature>
<feature type="topological domain" description="Extracellular" evidence="2">
    <location>
        <begin position="377"/>
        <end position="383"/>
    </location>
</feature>
<feature type="transmembrane region" description="Helical; Name=Segment S6" evidence="2">
    <location>
        <begin position="384"/>
        <end position="412"/>
    </location>
</feature>
<feature type="topological domain" description="Cytoplasmic" evidence="2">
    <location>
        <begin position="413"/>
        <end position="494"/>
    </location>
</feature>
<feature type="region of interest" description="Tetramerization domain" evidence="2">
    <location>
        <begin position="1"/>
        <end position="124"/>
    </location>
</feature>
<feature type="region of interest" description="Disordered" evidence="4">
    <location>
        <begin position="1"/>
        <end position="25"/>
    </location>
</feature>
<feature type="region of interest" description="S4-S5 linker" evidence="2">
    <location>
        <begin position="307"/>
        <end position="320"/>
    </location>
</feature>
<feature type="short sequence motif" description="Selectivity filter" evidence="2">
    <location>
        <begin position="369"/>
        <end position="374"/>
    </location>
</feature>
<feature type="short sequence motif" description="PDZ-binding" evidence="2">
    <location>
        <begin position="492"/>
        <end position="494"/>
    </location>
</feature>
<feature type="site" description="Important for binding with the scorpion mesomartoxin; when the scorpion mesomartoxin-rKv1.2/KCNA2 interaction is modeled, this residue is close to the 'Y-57' residue of the toxin" evidence="2">
    <location>
        <position position="376"/>
    </location>
</feature>
<feature type="lipid moiety-binding region" description="S-palmitoyl cysteine" evidence="3">
    <location>
        <position position="239"/>
    </location>
</feature>
<feature type="glycosylation site" description="N-linked (GlcNAc...) asparagine" evidence="3">
    <location>
        <position position="203"/>
    </location>
</feature>
<dbReference type="EMBL" id="AF252301">
    <property type="protein sequence ID" value="AAF70087.1"/>
    <property type="molecule type" value="Genomic_DNA"/>
</dbReference>
<dbReference type="SMR" id="Q9I830"/>
<dbReference type="GlyCosmos" id="Q9I830">
    <property type="glycosylation" value="1 site, No reported glycans"/>
</dbReference>
<dbReference type="OrthoDB" id="415460at2759"/>
<dbReference type="Proteomes" id="UP000694395">
    <property type="component" value="Unplaced"/>
</dbReference>
<dbReference type="GO" id="GO:0043679">
    <property type="term" value="C:axon terminus"/>
    <property type="evidence" value="ECO:0007669"/>
    <property type="project" value="TreeGrafter"/>
</dbReference>
<dbReference type="GO" id="GO:0030425">
    <property type="term" value="C:dendrite"/>
    <property type="evidence" value="ECO:0007669"/>
    <property type="project" value="TreeGrafter"/>
</dbReference>
<dbReference type="GO" id="GO:0044224">
    <property type="term" value="C:juxtaparanode region of axon"/>
    <property type="evidence" value="ECO:0000250"/>
    <property type="project" value="UniProtKB"/>
</dbReference>
<dbReference type="GO" id="GO:0005886">
    <property type="term" value="C:plasma membrane"/>
    <property type="evidence" value="ECO:0000250"/>
    <property type="project" value="UniProtKB"/>
</dbReference>
<dbReference type="GO" id="GO:0008076">
    <property type="term" value="C:voltage-gated potassium channel complex"/>
    <property type="evidence" value="ECO:0000250"/>
    <property type="project" value="UniProtKB"/>
</dbReference>
<dbReference type="GO" id="GO:0005251">
    <property type="term" value="F:delayed rectifier potassium channel activity"/>
    <property type="evidence" value="ECO:0000250"/>
    <property type="project" value="UniProtKB"/>
</dbReference>
<dbReference type="GO" id="GO:0005249">
    <property type="term" value="F:voltage-gated potassium channel activity"/>
    <property type="evidence" value="ECO:0000250"/>
    <property type="project" value="UniProtKB"/>
</dbReference>
<dbReference type="GO" id="GO:0019228">
    <property type="term" value="P:neuronal action potential"/>
    <property type="evidence" value="ECO:0000250"/>
    <property type="project" value="UniProtKB"/>
</dbReference>
<dbReference type="GO" id="GO:0071805">
    <property type="term" value="P:potassium ion transmembrane transport"/>
    <property type="evidence" value="ECO:0000250"/>
    <property type="project" value="UniProtKB"/>
</dbReference>
<dbReference type="GO" id="GO:0051260">
    <property type="term" value="P:protein homooligomerization"/>
    <property type="evidence" value="ECO:0007669"/>
    <property type="project" value="InterPro"/>
</dbReference>
<dbReference type="FunFam" id="1.10.287.70:FF:000002">
    <property type="entry name" value="Potassium voltage-gated channel subfamily a member"/>
    <property type="match status" value="1"/>
</dbReference>
<dbReference type="FunFam" id="1.20.120.350:FF:000025">
    <property type="entry name" value="Potassium voltage-gated channel subfamily A member 2"/>
    <property type="match status" value="1"/>
</dbReference>
<dbReference type="FunFam" id="3.30.710.10:FF:000007">
    <property type="entry name" value="Potassium voltage-gated channel subfamily A member 2"/>
    <property type="match status" value="1"/>
</dbReference>
<dbReference type="Gene3D" id="1.10.287.70">
    <property type="match status" value="1"/>
</dbReference>
<dbReference type="Gene3D" id="3.30.710.10">
    <property type="entry name" value="Potassium Channel Kv1.1, Chain A"/>
    <property type="match status" value="1"/>
</dbReference>
<dbReference type="Gene3D" id="1.20.120.350">
    <property type="entry name" value="Voltage-gated potassium channels. Chain C"/>
    <property type="match status" value="1"/>
</dbReference>
<dbReference type="InterPro" id="IPR000210">
    <property type="entry name" value="BTB/POZ_dom"/>
</dbReference>
<dbReference type="InterPro" id="IPR005821">
    <property type="entry name" value="Ion_trans_dom"/>
</dbReference>
<dbReference type="InterPro" id="IPR003968">
    <property type="entry name" value="K_chnl_volt-dep_Kv"/>
</dbReference>
<dbReference type="InterPro" id="IPR003972">
    <property type="entry name" value="K_chnl_volt-dep_Kv1"/>
</dbReference>
<dbReference type="InterPro" id="IPR004049">
    <property type="entry name" value="K_chnl_volt-dep_Kv1.2"/>
</dbReference>
<dbReference type="InterPro" id="IPR011333">
    <property type="entry name" value="SKP1/BTB/POZ_sf"/>
</dbReference>
<dbReference type="InterPro" id="IPR003131">
    <property type="entry name" value="T1-type_BTB"/>
</dbReference>
<dbReference type="InterPro" id="IPR028325">
    <property type="entry name" value="VG_K_chnl"/>
</dbReference>
<dbReference type="InterPro" id="IPR027359">
    <property type="entry name" value="Volt_channel_dom_sf"/>
</dbReference>
<dbReference type="PANTHER" id="PTHR11537:SF23">
    <property type="entry name" value="POTASSIUM VOLTAGE-GATED CHANNEL SUBFAMILY A MEMBER 2"/>
    <property type="match status" value="1"/>
</dbReference>
<dbReference type="PANTHER" id="PTHR11537">
    <property type="entry name" value="VOLTAGE-GATED POTASSIUM CHANNEL"/>
    <property type="match status" value="1"/>
</dbReference>
<dbReference type="Pfam" id="PF02214">
    <property type="entry name" value="BTB_2"/>
    <property type="match status" value="1"/>
</dbReference>
<dbReference type="Pfam" id="PF00520">
    <property type="entry name" value="Ion_trans"/>
    <property type="match status" value="1"/>
</dbReference>
<dbReference type="PRINTS" id="PR00169">
    <property type="entry name" value="KCHANNEL"/>
</dbReference>
<dbReference type="PRINTS" id="PR01509">
    <property type="entry name" value="KV12CHANNEL"/>
</dbReference>
<dbReference type="PRINTS" id="PR01491">
    <property type="entry name" value="KVCHANNEL"/>
</dbReference>
<dbReference type="PRINTS" id="PR01496">
    <property type="entry name" value="SHAKERCHANEL"/>
</dbReference>
<dbReference type="SMART" id="SM00225">
    <property type="entry name" value="BTB"/>
    <property type="match status" value="1"/>
</dbReference>
<dbReference type="SUPFAM" id="SSF54695">
    <property type="entry name" value="POZ domain"/>
    <property type="match status" value="1"/>
</dbReference>
<dbReference type="SUPFAM" id="SSF81324">
    <property type="entry name" value="Voltage-gated potassium channels"/>
    <property type="match status" value="1"/>
</dbReference>
<accession>Q9I830</accession>
<name>KCNA2_ONCMY</name>
<organism>
    <name type="scientific">Oncorhynchus mykiss</name>
    <name type="common">Rainbow trout</name>
    <name type="synonym">Salmo gairdneri</name>
    <dbReference type="NCBI Taxonomy" id="8022"/>
    <lineage>
        <taxon>Eukaryota</taxon>
        <taxon>Metazoa</taxon>
        <taxon>Chordata</taxon>
        <taxon>Craniata</taxon>
        <taxon>Vertebrata</taxon>
        <taxon>Euteleostomi</taxon>
        <taxon>Actinopterygii</taxon>
        <taxon>Neopterygii</taxon>
        <taxon>Teleostei</taxon>
        <taxon>Protacanthopterygii</taxon>
        <taxon>Salmoniformes</taxon>
        <taxon>Salmonidae</taxon>
        <taxon>Salmoninae</taxon>
        <taxon>Oncorhynchus</taxon>
    </lineage>
</organism>
<proteinExistence type="evidence at transcript level"/>
<evidence type="ECO:0000250" key="1">
    <source>
        <dbReference type="UniProtKB" id="P63141"/>
    </source>
</evidence>
<evidence type="ECO:0000250" key="2">
    <source>
        <dbReference type="UniProtKB" id="P63142"/>
    </source>
</evidence>
<evidence type="ECO:0000255" key="3"/>
<evidence type="ECO:0000256" key="4">
    <source>
        <dbReference type="SAM" id="MobiDB-lite"/>
    </source>
</evidence>
<evidence type="ECO:0000269" key="5">
    <source>
    </source>
</evidence>
<evidence type="ECO:0000303" key="6">
    <source>
    </source>
</evidence>
<evidence type="ECO:0000305" key="7"/>
<comment type="function">
    <text evidence="1 2">Voltage-gated potassium channel that mediates transmembrane potassium transport in excitable membranes, primarily in the brain and central nervous system. Prevents aberrant action potential firing and regulates neuronal output. Forms tetrameric potassium-selective channels through which potassium ions pass in accordance with their electrochemical gradient. The channel alternates between opened and closed conformations in response to the voltage difference across the membrane (By similarity). Can form functional homotetrameric channels and heterotetrameric channels with other family members; the channels characteristics depend critically on the types of channel-forming alpha subunits that are present (By similarity). Channel properties are modulated by cytoplasmic beta subunits that regulate the subcellular location of the alpha subunits (By similarity). In vivo, membranes probably contain a mixture of heteromeric potassium channel complexes, making it difficult to assign currents observed in intact tissues to any particular potassium channel family member. Homotetrameric KCNA2 forms a delayed-rectifier potassium channel that opens in response to membrane depolarization, followed by slow spontaneous channel closure (By similarity). Regulates neuronal excitability and plays a role as pacemaker in the regulation of neuronal action potentials (By similarity). KCNA2-containing channels play a presynaptic role and prevent hyperexcitability and aberrant action potential firing (By similarity). Response to toxins that are selective for KCNA2-containing potassium channels suggests that in Purkinje cells, dendritic subthreshold KCNA2-containing potassium channels prevent random spontaneous calcium spikes, suppressing dendritic hyperexcitability without hindering the generation of somatic action potentials, and thereby play an important role in motor coordination (By similarity). Plays a role in the induction of long-term potentiation of neuron excitability in the CA3 layer of the hippocampus (By similarity).</text>
</comment>
<comment type="catalytic activity">
    <reaction evidence="2">
        <text>K(+)(in) = K(+)(out)</text>
        <dbReference type="Rhea" id="RHEA:29463"/>
        <dbReference type="ChEBI" id="CHEBI:29103"/>
    </reaction>
</comment>
<comment type="subunit">
    <text evidence="2">Homotetramer and heterotetramer with other family members.</text>
</comment>
<comment type="subcellular location">
    <subcellularLocation>
        <location evidence="2">Cell membrane</location>
        <topology evidence="2">Multi-pass membrane protein</topology>
    </subcellularLocation>
</comment>
<comment type="tissue specificity">
    <text evidence="5">Expressed in oligodendrocytes.</text>
</comment>
<comment type="domain">
    <text evidence="2">The cytoplasmic N-terminus is important for tetramerization. Interactions between the different subunits modulate the gating characteristics (By similarity).</text>
</comment>
<comment type="domain">
    <text evidence="2">The transmembrane segment S4 functions as a voltage-sensor and is characterized by a series of positively charged amino acids at every third position. Channel opening and closing is effected by a conformation change that affects the position and orientation of the voltage-sensor paddle formed by S3 and S4 within the membrane. A transmembrane electric field that is positive inside would push the positively charged S4 segment outwards, thereby opening the pore, while a field that is negative inside would pull the S4 segment inwards and close the pore. Changes in the position and orientation of S4 are then transmitted to the activation gate formed by the inner helix bundle via the S4-S5 linker region.</text>
</comment>
<comment type="similarity">
    <text evidence="7">Belongs to the potassium channel family. A (Shaker) (TC 1.A.1.2) subfamily. Kv1.2/KCNA2 sub-subfamily.</text>
</comment>
<sequence length="494" mass="55900">MTVATGDPSDEAAAHPGNPAEYDPDADHECCERVVINISGLRFETQLKTLSQFPDTLLGDPKKRMRYFDPLRNEYFFDRSRTSFDAILYFYQSGGRLRRPANVTLDIFSEEIRFYELGDEAIELFREDEGFVKEEERPLPDNEFQRQVWLLFEYPESSGPARIIAIISVMVILISIVSFCLETLPIFRNDDDEPHSVFDTNTNTTIYFTSTYFTDPFFILETLCIIWFSFEFLVRLFACPSKSGFFGNVMNIIDVVAIIPYFITLATELAEKPEDGQAGQQAMSLAILRVIRLVRVFRIFKLSRHSKGLQILGQTLKASMRELGLLIFFLFIGVILFSSAVYFAEADEPESQFESIPDAFWWAVVSMTTVGYGDMVPTTIGGKIVGSLCAIAGVLTIALPVPVIVSNFNYFYHRETEGEEQAQCLGPVTKEDSNEELKKSRSGSTISKSDYMEIQEGVNNTIEDIPEENLKTQANCTTLANTNYVNITKMLTDV</sequence>
<gene>
    <name type="primary">kcna2</name>
</gene>
<reference key="1">
    <citation type="journal article" date="1998" name="J. Neurosci. Res.">
        <title>Molecular structure and expression of shaker type potassium channels in glial cells of trout CNS.</title>
        <authorList>
            <person name="Nguyen T.-D."/>
            <person name="Jeserich G."/>
        </authorList>
    </citation>
    <scope>NUCLEOTIDE SEQUENCE [GENOMIC DNA]</scope>
    <scope>TISSUE SPECIFICITY</scope>
    <source>
        <tissue>Brain</tissue>
    </source>
</reference>
<keyword id="KW-1003">Cell membrane</keyword>
<keyword id="KW-0325">Glycoprotein</keyword>
<keyword id="KW-0407">Ion channel</keyword>
<keyword id="KW-0406">Ion transport</keyword>
<keyword id="KW-0449">Lipoprotein</keyword>
<keyword id="KW-0472">Membrane</keyword>
<keyword id="KW-0564">Palmitate</keyword>
<keyword id="KW-0597">Phosphoprotein</keyword>
<keyword id="KW-0630">Potassium</keyword>
<keyword id="KW-0631">Potassium channel</keyword>
<keyword id="KW-0633">Potassium transport</keyword>
<keyword id="KW-0812">Transmembrane</keyword>
<keyword id="KW-1133">Transmembrane helix</keyword>
<keyword id="KW-0813">Transport</keyword>
<keyword id="KW-0851">Voltage-gated channel</keyword>
<protein>
    <recommendedName>
        <fullName>Potassium voltage-gated channel subfamily A member 2</fullName>
    </recommendedName>
    <alternativeName>
        <fullName evidence="6">Shaker-related potassium channel tsha1</fullName>
    </alternativeName>
    <alternativeName>
        <fullName evidence="6">Trout shaker 1</fullName>
    </alternativeName>
    <alternativeName>
        <fullName>Voltage-gated potassium channel subunit Kv1.2</fullName>
    </alternativeName>
</protein>